<evidence type="ECO:0000255" key="1"/>
<evidence type="ECO:0000255" key="2">
    <source>
        <dbReference type="PROSITE-ProRule" id="PRU00521"/>
    </source>
</evidence>
<feature type="chain" id="PRO_0000197773" description="Green-sensitive opsin-2">
    <location>
        <begin position="1"/>
        <end position="353"/>
    </location>
</feature>
<feature type="topological domain" description="Extracellular" evidence="1">
    <location>
        <begin position="1"/>
        <end position="47"/>
    </location>
</feature>
<feature type="transmembrane region" description="Helical; Name=1" evidence="1">
    <location>
        <begin position="48"/>
        <end position="72"/>
    </location>
</feature>
<feature type="topological domain" description="Cytoplasmic" evidence="1">
    <location>
        <begin position="73"/>
        <end position="84"/>
    </location>
</feature>
<feature type="transmembrane region" description="Helical; Name=2" evidence="1">
    <location>
        <begin position="85"/>
        <end position="110"/>
    </location>
</feature>
<feature type="topological domain" description="Extracellular" evidence="1">
    <location>
        <begin position="111"/>
        <end position="124"/>
    </location>
</feature>
<feature type="transmembrane region" description="Helical; Name=3" evidence="1">
    <location>
        <begin position="125"/>
        <end position="144"/>
    </location>
</feature>
<feature type="topological domain" description="Cytoplasmic" evidence="1">
    <location>
        <begin position="145"/>
        <end position="163"/>
    </location>
</feature>
<feature type="transmembrane region" description="Helical; Name=4" evidence="1">
    <location>
        <begin position="164"/>
        <end position="187"/>
    </location>
</feature>
<feature type="topological domain" description="Extracellular" evidence="1">
    <location>
        <begin position="188"/>
        <end position="213"/>
    </location>
</feature>
<feature type="transmembrane region" description="Helical; Name=5" evidence="1">
    <location>
        <begin position="214"/>
        <end position="241"/>
    </location>
</feature>
<feature type="topological domain" description="Cytoplasmic" evidence="1">
    <location>
        <begin position="242"/>
        <end position="263"/>
    </location>
</feature>
<feature type="transmembrane region" description="Helical; Name=6" evidence="1">
    <location>
        <begin position="264"/>
        <end position="287"/>
    </location>
</feature>
<feature type="topological domain" description="Extracellular" evidence="1">
    <location>
        <begin position="288"/>
        <end position="295"/>
    </location>
</feature>
<feature type="transmembrane region" description="Helical; Name=7" evidence="1">
    <location>
        <begin position="296"/>
        <end position="320"/>
    </location>
</feature>
<feature type="topological domain" description="Cytoplasmic" evidence="1">
    <location>
        <begin position="321"/>
        <end position="353"/>
    </location>
</feature>
<feature type="modified residue" description="N6-(retinylidene)lysine">
    <location>
        <position position="307"/>
    </location>
</feature>
<feature type="glycosylation site" description="N-linked (GlcNAc...) asparagine" evidence="1">
    <location>
        <position position="29"/>
    </location>
</feature>
<feature type="disulfide bond" evidence="2">
    <location>
        <begin position="121"/>
        <end position="198"/>
    </location>
</feature>
<organism>
    <name type="scientific">Psalidodon fasciatus</name>
    <name type="common">Banded astyanax</name>
    <name type="synonym">Astyanax fasciatus</name>
    <dbReference type="NCBI Taxonomy" id="223369"/>
    <lineage>
        <taxon>Eukaryota</taxon>
        <taxon>Metazoa</taxon>
        <taxon>Chordata</taxon>
        <taxon>Craniata</taxon>
        <taxon>Vertebrata</taxon>
        <taxon>Euteleostomi</taxon>
        <taxon>Actinopterygii</taxon>
        <taxon>Neopterygii</taxon>
        <taxon>Teleostei</taxon>
        <taxon>Ostariophysi</taxon>
        <taxon>Characiformes</taxon>
        <taxon>Characoidei</taxon>
        <taxon>Acestrorhamphidae</taxon>
        <taxon>Acestrorhamphidae polyphyletic genera</taxon>
        <taxon>Psalidodon</taxon>
    </lineage>
</organism>
<protein>
    <recommendedName>
        <fullName>Green-sensitive opsin-2</fullName>
    </recommendedName>
    <alternativeName>
        <fullName>Green cone photoreceptor pigment 2</fullName>
    </alternativeName>
</protein>
<reference key="1">
    <citation type="journal article" date="1990" name="Proc. Natl. Acad. Sci. U.S.A.">
        <title>Convergent evolution of the red- and green-like visual pigment genes in fish, Astyanax fasciatus, and human.</title>
        <authorList>
            <person name="Yokoyama R."/>
            <person name="Yokoyama S."/>
        </authorList>
    </citation>
    <scope>NUCLEOTIDE SEQUENCE [GENOMIC DNA]</scope>
    <source>
        <tissue>Pineal gland</tissue>
    </source>
</reference>
<keyword id="KW-0157">Chromophore</keyword>
<keyword id="KW-1015">Disulfide bond</keyword>
<keyword id="KW-0297">G-protein coupled receptor</keyword>
<keyword id="KW-0325">Glycoprotein</keyword>
<keyword id="KW-0472">Membrane</keyword>
<keyword id="KW-0597">Phosphoprotein</keyword>
<keyword id="KW-0600">Photoreceptor protein</keyword>
<keyword id="KW-0675">Receptor</keyword>
<keyword id="KW-0681">Retinal protein</keyword>
<keyword id="KW-0716">Sensory transduction</keyword>
<keyword id="KW-0807">Transducer</keyword>
<keyword id="KW-0812">Transmembrane</keyword>
<keyword id="KW-1133">Transmembrane helix</keyword>
<keyword id="KW-0844">Vision</keyword>
<proteinExistence type="evidence at protein level"/>
<name>OPSG2_PSAFA</name>
<sequence length="353" mass="39465">MAAHEPVFAARRHNEDTTRESAFVYTNANNTRDPFEGPNYHIAPRWVYNVSSLWMIFVVIASVFTNGLVIVATAKFKKLRHPLNWILVNLAIADLGETVLASTISVINQIFGYFILGHPMCVFEGWTVSVCGITALWSLTIISWERWVVVCKPFGNVKFDGKWAAGGIIFSWVWAIIWCTPPIFGWSRYWPHGLKTSCGPDVFSGSEDPGVASYMITLMLTCCILPLSIIIICYIFVWSAIHQVAQQQKDSESTQKAEKEVSRMVVVMILAFIVCWGPYASFATFSAVNPGYAWHPLAAAMPAYFAKSATIYNPIIYVFMNRQFRSCIMQLFGKKVEDASEVSGSTTEVSTAS</sequence>
<comment type="function">
    <text>Visual pigments are the light-absorbing molecules that mediate vision. They consist of an apoprotein, opsin, covalently linked to cis-retinal.</text>
</comment>
<comment type="subcellular location">
    <subcellularLocation>
        <location>Membrane</location>
        <topology>Multi-pass membrane protein</topology>
    </subcellularLocation>
</comment>
<comment type="tissue specificity">
    <text>The color pigments are found in the cone photoreceptor cells.</text>
</comment>
<comment type="miscellaneous">
    <text>This fish possesses three genes for green opsin. Two (G103 and G101) that belong to the LWS/MWS group and one (RH11) that belongs to the RH2 group.</text>
</comment>
<comment type="similarity">
    <text evidence="2">Belongs to the G-protein coupled receptor 1 family. Opsin subfamily.</text>
</comment>
<gene>
    <name type="primary">G101</name>
</gene>
<dbReference type="EMBL" id="M38624">
    <property type="protein sequence ID" value="AAA62671.1"/>
    <property type="molecule type" value="Genomic_DNA"/>
</dbReference>
<dbReference type="EMBL" id="M38619">
    <property type="protein sequence ID" value="AAA62671.1"/>
    <property type="status" value="JOINED"/>
    <property type="molecule type" value="Genomic_DNA"/>
</dbReference>
<dbReference type="EMBL" id="M38620">
    <property type="protein sequence ID" value="AAA62671.1"/>
    <property type="status" value="JOINED"/>
    <property type="molecule type" value="Genomic_DNA"/>
</dbReference>
<dbReference type="EMBL" id="M38621">
    <property type="protein sequence ID" value="AAA62671.1"/>
    <property type="status" value="JOINED"/>
    <property type="molecule type" value="Genomic_DNA"/>
</dbReference>
<dbReference type="EMBL" id="M38622">
    <property type="protein sequence ID" value="AAA62671.1"/>
    <property type="status" value="JOINED"/>
    <property type="molecule type" value="Genomic_DNA"/>
</dbReference>
<dbReference type="EMBL" id="M38623">
    <property type="protein sequence ID" value="AAA62671.1"/>
    <property type="status" value="JOINED"/>
    <property type="molecule type" value="Genomic_DNA"/>
</dbReference>
<dbReference type="PIR" id="A38421">
    <property type="entry name" value="A38421"/>
</dbReference>
<dbReference type="SMR" id="P22331"/>
<dbReference type="GlyCosmos" id="P22331">
    <property type="glycosylation" value="1 site, No reported glycans"/>
</dbReference>
<dbReference type="GO" id="GO:0016020">
    <property type="term" value="C:membrane"/>
    <property type="evidence" value="ECO:0007669"/>
    <property type="project" value="UniProtKB-SubCell"/>
</dbReference>
<dbReference type="GO" id="GO:0004930">
    <property type="term" value="F:G protein-coupled receptor activity"/>
    <property type="evidence" value="ECO:0007669"/>
    <property type="project" value="UniProtKB-KW"/>
</dbReference>
<dbReference type="GO" id="GO:0009881">
    <property type="term" value="F:photoreceptor activity"/>
    <property type="evidence" value="ECO:0007669"/>
    <property type="project" value="UniProtKB-KW"/>
</dbReference>
<dbReference type="GO" id="GO:0007602">
    <property type="term" value="P:phototransduction"/>
    <property type="evidence" value="ECO:0007669"/>
    <property type="project" value="UniProtKB-KW"/>
</dbReference>
<dbReference type="GO" id="GO:0007601">
    <property type="term" value="P:visual perception"/>
    <property type="evidence" value="ECO:0007669"/>
    <property type="project" value="UniProtKB-KW"/>
</dbReference>
<dbReference type="FunFam" id="1.20.1070.10:FF:000090">
    <property type="entry name" value="Long-wave-sensitive opsin 1"/>
    <property type="match status" value="1"/>
</dbReference>
<dbReference type="Gene3D" id="1.20.1070.10">
    <property type="entry name" value="Rhodopsin 7-helix transmembrane proteins"/>
    <property type="match status" value="1"/>
</dbReference>
<dbReference type="InterPro" id="IPR050125">
    <property type="entry name" value="GPCR_opsins"/>
</dbReference>
<dbReference type="InterPro" id="IPR000276">
    <property type="entry name" value="GPCR_Rhodpsn"/>
</dbReference>
<dbReference type="InterPro" id="IPR017452">
    <property type="entry name" value="GPCR_Rhodpsn_7TM"/>
</dbReference>
<dbReference type="InterPro" id="IPR001760">
    <property type="entry name" value="Opsin"/>
</dbReference>
<dbReference type="InterPro" id="IPR000378">
    <property type="entry name" value="Opsin_red/grn"/>
</dbReference>
<dbReference type="InterPro" id="IPR027430">
    <property type="entry name" value="Retinal_BS"/>
</dbReference>
<dbReference type="PANTHER" id="PTHR24240">
    <property type="entry name" value="OPSIN"/>
    <property type="match status" value="1"/>
</dbReference>
<dbReference type="Pfam" id="PF00001">
    <property type="entry name" value="7tm_1"/>
    <property type="match status" value="1"/>
</dbReference>
<dbReference type="PRINTS" id="PR00237">
    <property type="entry name" value="GPCRRHODOPSN"/>
</dbReference>
<dbReference type="PRINTS" id="PR00238">
    <property type="entry name" value="OPSIN"/>
</dbReference>
<dbReference type="PRINTS" id="PR00575">
    <property type="entry name" value="OPSINREDGRN"/>
</dbReference>
<dbReference type="SMART" id="SM01381">
    <property type="entry name" value="7TM_GPCR_Srsx"/>
    <property type="match status" value="1"/>
</dbReference>
<dbReference type="SUPFAM" id="SSF81321">
    <property type="entry name" value="Family A G protein-coupled receptor-like"/>
    <property type="match status" value="1"/>
</dbReference>
<dbReference type="PROSITE" id="PS00237">
    <property type="entry name" value="G_PROTEIN_RECEP_F1_1"/>
    <property type="match status" value="1"/>
</dbReference>
<dbReference type="PROSITE" id="PS50262">
    <property type="entry name" value="G_PROTEIN_RECEP_F1_2"/>
    <property type="match status" value="1"/>
</dbReference>
<dbReference type="PROSITE" id="PS00238">
    <property type="entry name" value="OPSIN"/>
    <property type="match status" value="1"/>
</dbReference>
<accession>P22331</accession>